<accession>A1R520</accession>
<name>TRUB_PAEAT</name>
<keyword id="KW-0413">Isomerase</keyword>
<keyword id="KW-0819">tRNA processing</keyword>
<comment type="function">
    <text evidence="1">Responsible for synthesis of pseudouridine from uracil-55 in the psi GC loop of transfer RNAs.</text>
</comment>
<comment type="catalytic activity">
    <reaction evidence="1">
        <text>uridine(55) in tRNA = pseudouridine(55) in tRNA</text>
        <dbReference type="Rhea" id="RHEA:42532"/>
        <dbReference type="Rhea" id="RHEA-COMP:10101"/>
        <dbReference type="Rhea" id="RHEA-COMP:10102"/>
        <dbReference type="ChEBI" id="CHEBI:65314"/>
        <dbReference type="ChEBI" id="CHEBI:65315"/>
        <dbReference type="EC" id="5.4.99.25"/>
    </reaction>
</comment>
<comment type="similarity">
    <text evidence="1">Belongs to the pseudouridine synthase TruB family. Type 1 subfamily.</text>
</comment>
<protein>
    <recommendedName>
        <fullName evidence="1">tRNA pseudouridine synthase B</fullName>
        <ecNumber evidence="1">5.4.99.25</ecNumber>
    </recommendedName>
    <alternativeName>
        <fullName evidence="1">tRNA pseudouridine(55) synthase</fullName>
        <shortName evidence="1">Psi55 synthase</shortName>
    </alternativeName>
    <alternativeName>
        <fullName evidence="1">tRNA pseudouridylate synthase</fullName>
    </alternativeName>
    <alternativeName>
        <fullName evidence="1">tRNA-uridine isomerase</fullName>
    </alternativeName>
</protein>
<proteinExistence type="inferred from homology"/>
<dbReference type="EC" id="5.4.99.25" evidence="1"/>
<dbReference type="EMBL" id="CP000474">
    <property type="protein sequence ID" value="ABM10086.1"/>
    <property type="molecule type" value="Genomic_DNA"/>
</dbReference>
<dbReference type="RefSeq" id="WP_011774277.1">
    <property type="nucleotide sequence ID" value="NC_008711.1"/>
</dbReference>
<dbReference type="SMR" id="A1R520"/>
<dbReference type="STRING" id="290340.AAur_1565"/>
<dbReference type="KEGG" id="aau:AAur_1565"/>
<dbReference type="eggNOG" id="COG0130">
    <property type="taxonomic scope" value="Bacteria"/>
</dbReference>
<dbReference type="HOGENOM" id="CLU_032087_0_0_11"/>
<dbReference type="Proteomes" id="UP000000637">
    <property type="component" value="Chromosome"/>
</dbReference>
<dbReference type="GO" id="GO:0003723">
    <property type="term" value="F:RNA binding"/>
    <property type="evidence" value="ECO:0007669"/>
    <property type="project" value="InterPro"/>
</dbReference>
<dbReference type="GO" id="GO:0160148">
    <property type="term" value="F:tRNA pseudouridine(55) synthase activity"/>
    <property type="evidence" value="ECO:0007669"/>
    <property type="project" value="UniProtKB-EC"/>
</dbReference>
<dbReference type="GO" id="GO:1990481">
    <property type="term" value="P:mRNA pseudouridine synthesis"/>
    <property type="evidence" value="ECO:0007669"/>
    <property type="project" value="TreeGrafter"/>
</dbReference>
<dbReference type="GO" id="GO:0031119">
    <property type="term" value="P:tRNA pseudouridine synthesis"/>
    <property type="evidence" value="ECO:0007669"/>
    <property type="project" value="UniProtKB-UniRule"/>
</dbReference>
<dbReference type="CDD" id="cd02573">
    <property type="entry name" value="PseudoU_synth_EcTruB"/>
    <property type="match status" value="1"/>
</dbReference>
<dbReference type="FunFam" id="3.30.2350.10:FF:000011">
    <property type="entry name" value="tRNA pseudouridine synthase B"/>
    <property type="match status" value="1"/>
</dbReference>
<dbReference type="Gene3D" id="3.30.2350.10">
    <property type="entry name" value="Pseudouridine synthase"/>
    <property type="match status" value="1"/>
</dbReference>
<dbReference type="Gene3D" id="2.30.130.10">
    <property type="entry name" value="PUA domain"/>
    <property type="match status" value="1"/>
</dbReference>
<dbReference type="HAMAP" id="MF_01080">
    <property type="entry name" value="TruB_bact"/>
    <property type="match status" value="1"/>
</dbReference>
<dbReference type="InterPro" id="IPR020103">
    <property type="entry name" value="PsdUridine_synth_cat_dom_sf"/>
</dbReference>
<dbReference type="InterPro" id="IPR002501">
    <property type="entry name" value="PsdUridine_synth_N"/>
</dbReference>
<dbReference type="InterPro" id="IPR015947">
    <property type="entry name" value="PUA-like_sf"/>
</dbReference>
<dbReference type="InterPro" id="IPR036974">
    <property type="entry name" value="PUA_sf"/>
</dbReference>
<dbReference type="InterPro" id="IPR015225">
    <property type="entry name" value="tRNA_psdUridine_synth_fam2_C"/>
</dbReference>
<dbReference type="InterPro" id="IPR014780">
    <property type="entry name" value="tRNA_psdUridine_synth_TruB"/>
</dbReference>
<dbReference type="InterPro" id="IPR032819">
    <property type="entry name" value="TruB_C"/>
</dbReference>
<dbReference type="NCBIfam" id="TIGR00431">
    <property type="entry name" value="TruB"/>
    <property type="match status" value="1"/>
</dbReference>
<dbReference type="PANTHER" id="PTHR13767:SF2">
    <property type="entry name" value="PSEUDOURIDYLATE SYNTHASE TRUB1"/>
    <property type="match status" value="1"/>
</dbReference>
<dbReference type="PANTHER" id="PTHR13767">
    <property type="entry name" value="TRNA-PSEUDOURIDINE SYNTHASE"/>
    <property type="match status" value="1"/>
</dbReference>
<dbReference type="Pfam" id="PF09142">
    <property type="entry name" value="TruB_C"/>
    <property type="match status" value="1"/>
</dbReference>
<dbReference type="Pfam" id="PF16198">
    <property type="entry name" value="TruB_C_2"/>
    <property type="match status" value="1"/>
</dbReference>
<dbReference type="Pfam" id="PF01509">
    <property type="entry name" value="TruB_N"/>
    <property type="match status" value="1"/>
</dbReference>
<dbReference type="SUPFAM" id="SSF55120">
    <property type="entry name" value="Pseudouridine synthase"/>
    <property type="match status" value="1"/>
</dbReference>
<dbReference type="SUPFAM" id="SSF88697">
    <property type="entry name" value="PUA domain-like"/>
    <property type="match status" value="1"/>
</dbReference>
<feature type="chain" id="PRO_1000084543" description="tRNA pseudouridine synthase B">
    <location>
        <begin position="1"/>
        <end position="311"/>
    </location>
</feature>
<feature type="region of interest" description="Disordered" evidence="2">
    <location>
        <begin position="237"/>
        <end position="268"/>
    </location>
</feature>
<feature type="compositionally biased region" description="Low complexity" evidence="2">
    <location>
        <begin position="254"/>
        <end position="268"/>
    </location>
</feature>
<feature type="active site" description="Nucleophile" evidence="1">
    <location>
        <position position="39"/>
    </location>
</feature>
<sequence>MLSGLVIVDKPQGWTSHDVVGRMRRLAGTRKVGHAGTLDPMATGVLVLGINKATRLLTYIVGTSKTYTATIRLGETTITDDAEGEVTEARTAAHITDDAVAVGVAALTGPIQQVPSSVSAIKVNGERSYARVRSGEEVKLAARPVTIHRFDVHSITRIDGGRVVDVDVTVECSSGTYIRALARDLGNALGIGGHLTALRRTQVGPYSLDQARTLEELAEELEVLEMSLAARSLMPNRELSEQETTEISFGRRIAAGPGAGTPDAATAEKPAAAFAPSGELVALLADTGSFAKPVLVFAPGTGTGTGTGQAK</sequence>
<reference key="1">
    <citation type="journal article" date="2006" name="PLoS Genet.">
        <title>Secrets of soil survival revealed by the genome sequence of Arthrobacter aurescens TC1.</title>
        <authorList>
            <person name="Mongodin E.F."/>
            <person name="Shapir N."/>
            <person name="Daugherty S.C."/>
            <person name="DeBoy R.T."/>
            <person name="Emerson J.B."/>
            <person name="Shvartzbeyn A."/>
            <person name="Radune D."/>
            <person name="Vamathevan J."/>
            <person name="Riggs F."/>
            <person name="Grinberg V."/>
            <person name="Khouri H.M."/>
            <person name="Wackett L.P."/>
            <person name="Nelson K.E."/>
            <person name="Sadowsky M.J."/>
        </authorList>
    </citation>
    <scope>NUCLEOTIDE SEQUENCE [LARGE SCALE GENOMIC DNA]</scope>
    <source>
        <strain>TC1</strain>
    </source>
</reference>
<evidence type="ECO:0000255" key="1">
    <source>
        <dbReference type="HAMAP-Rule" id="MF_01080"/>
    </source>
</evidence>
<evidence type="ECO:0000256" key="2">
    <source>
        <dbReference type="SAM" id="MobiDB-lite"/>
    </source>
</evidence>
<organism>
    <name type="scientific">Paenarthrobacter aurescens (strain TC1)</name>
    <dbReference type="NCBI Taxonomy" id="290340"/>
    <lineage>
        <taxon>Bacteria</taxon>
        <taxon>Bacillati</taxon>
        <taxon>Actinomycetota</taxon>
        <taxon>Actinomycetes</taxon>
        <taxon>Micrococcales</taxon>
        <taxon>Micrococcaceae</taxon>
        <taxon>Paenarthrobacter</taxon>
    </lineage>
</organism>
<gene>
    <name evidence="1" type="primary">truB</name>
    <name type="ordered locus">AAur_1565</name>
</gene>